<sequence length="424" mass="45738">MQLLNLGLLLLLPFVAGEIAPQPEPLRAGPSDIVPGQYIVTLKEGLASAQIREHKKWVSSVHQANLDSFAAGASGVETVGIMKNFHIHNLNMYSGGFDDKTAEDLRRSPDVKSVHPDQHVYLAKTVTQPQARWGLGYMSSKGMPVPLHSTLVDYLYDDKAGEGVWAYVLDTGINVDHIEFEDRGILGHNAIPNKPHTDEFEHGTYVAGIIAGKTYGVAKKANVVSAKAFDTGSSTYNYILETYDWIVKNITDSNRKNKAVINLSISGAKYQPFDDAVENAFKAGITAVVAAGNDGKDAKNNTPASSPNAITVGAVRWENTRPSLASNYGKIVDIWAPGELIKSCWKGGNNATSTQSGTSAASPHVAGLVAYLMSLENLPSPSAVTARVLNLTIPNLVKDAKDSPNRVVYNGIQERKFTLPKNTK</sequence>
<organism>
    <name type="scientific">Arthroderma otae</name>
    <name type="common">Microsporum canis</name>
    <dbReference type="NCBI Taxonomy" id="63405"/>
    <lineage>
        <taxon>Eukaryota</taxon>
        <taxon>Fungi</taxon>
        <taxon>Dikarya</taxon>
        <taxon>Ascomycota</taxon>
        <taxon>Pezizomycotina</taxon>
        <taxon>Eurotiomycetes</taxon>
        <taxon>Eurotiomycetidae</taxon>
        <taxon>Onygenales</taxon>
        <taxon>Arthrodermataceae</taxon>
        <taxon>Microsporum</taxon>
    </lineage>
</organism>
<evidence type="ECO:0000250" key="1"/>
<evidence type="ECO:0000255" key="2"/>
<evidence type="ECO:0000255" key="3">
    <source>
        <dbReference type="PROSITE-ProRule" id="PRU01240"/>
    </source>
</evidence>
<evidence type="ECO:0000305" key="4"/>
<reference key="1">
    <citation type="journal article" date="2002" name="J. Invest. Dermatol.">
        <title>Isolation of a Microsporum canis gene family encoding three subtilisin-like proteases expressed in vivo.</title>
        <authorList>
            <person name="Descamps F."/>
            <person name="Brouta F."/>
            <person name="Monod M."/>
            <person name="Zaugg C."/>
            <person name="Baar D."/>
            <person name="Losson B."/>
            <person name="Mignon B."/>
        </authorList>
    </citation>
    <scope>NUCLEOTIDE SEQUENCE [GENOMIC DNA]</scope>
    <source>
        <strain>IHEM 15221</strain>
    </source>
</reference>
<comment type="function">
    <text evidence="1">Secreted subtilisin-like serine protease with keratinolytic activity that contributes to pathogenicity.</text>
</comment>
<comment type="subcellular location">
    <subcellularLocation>
        <location evidence="1">Secreted</location>
    </subcellularLocation>
</comment>
<comment type="similarity">
    <text evidence="4">Belongs to the peptidase S8 family.</text>
</comment>
<comment type="sequence caution" evidence="4">
    <conflict type="erroneous gene model prediction">
        <sequence resource="EMBL-CDS" id="CAD24009"/>
    </conflict>
</comment>
<name>SUB2_ARTOT</name>
<feature type="signal peptide" evidence="2">
    <location>
        <begin position="1"/>
        <end position="17"/>
    </location>
</feature>
<feature type="propeptide" id="PRO_0000380767" evidence="1">
    <location>
        <begin position="18"/>
        <end position="123"/>
    </location>
</feature>
<feature type="chain" id="PRO_5000068279" description="Subtilisin-like protease 2">
    <location>
        <begin position="124"/>
        <end position="424"/>
    </location>
</feature>
<feature type="domain" description="Inhibitor I9" evidence="2">
    <location>
        <begin position="37"/>
        <end position="123"/>
    </location>
</feature>
<feature type="domain" description="Peptidase S8" evidence="3">
    <location>
        <begin position="132"/>
        <end position="424"/>
    </location>
</feature>
<feature type="active site" description="Charge relay system" evidence="3">
    <location>
        <position position="170"/>
    </location>
</feature>
<feature type="active site" description="Charge relay system" evidence="3">
    <location>
        <position position="202"/>
    </location>
</feature>
<feature type="active site" description="Charge relay system" evidence="3">
    <location>
        <position position="359"/>
    </location>
</feature>
<feature type="glycosylation site" description="N-linked (GlcNAc...) asparagine" evidence="2">
    <location>
        <position position="249"/>
    </location>
</feature>
<feature type="glycosylation site" description="N-linked (GlcNAc...) asparagine" evidence="2">
    <location>
        <position position="262"/>
    </location>
</feature>
<feature type="glycosylation site" description="N-linked (GlcNAc...) asparagine" evidence="2">
    <location>
        <position position="350"/>
    </location>
</feature>
<feature type="glycosylation site" description="N-linked (GlcNAc...) asparagine" evidence="2">
    <location>
        <position position="390"/>
    </location>
</feature>
<gene>
    <name type="primary">SUB2</name>
</gene>
<dbReference type="EC" id="3.4.21.-"/>
<dbReference type="EMBL" id="AJ431179">
    <property type="protein sequence ID" value="CAD24009.1"/>
    <property type="status" value="ALT_SEQ"/>
    <property type="molecule type" value="Genomic_DNA"/>
</dbReference>
<dbReference type="SMR" id="Q8J0D8"/>
<dbReference type="GlyCosmos" id="Q8J0D8">
    <property type="glycosylation" value="4 sites, No reported glycans"/>
</dbReference>
<dbReference type="GO" id="GO:0005576">
    <property type="term" value="C:extracellular region"/>
    <property type="evidence" value="ECO:0007669"/>
    <property type="project" value="UniProtKB-SubCell"/>
</dbReference>
<dbReference type="GO" id="GO:0004252">
    <property type="term" value="F:serine-type endopeptidase activity"/>
    <property type="evidence" value="ECO:0007669"/>
    <property type="project" value="InterPro"/>
</dbReference>
<dbReference type="GO" id="GO:0006508">
    <property type="term" value="P:proteolysis"/>
    <property type="evidence" value="ECO:0007669"/>
    <property type="project" value="UniProtKB-KW"/>
</dbReference>
<dbReference type="CDD" id="cd04077">
    <property type="entry name" value="Peptidases_S8_PCSK9_ProteinaseK_like"/>
    <property type="match status" value="1"/>
</dbReference>
<dbReference type="FunFam" id="3.40.50.200:FF:000007">
    <property type="entry name" value="Subtilisin-like serine protease"/>
    <property type="match status" value="1"/>
</dbReference>
<dbReference type="Gene3D" id="3.30.70.80">
    <property type="entry name" value="Peptidase S8 propeptide/proteinase inhibitor I9"/>
    <property type="match status" value="1"/>
</dbReference>
<dbReference type="Gene3D" id="3.40.50.200">
    <property type="entry name" value="Peptidase S8/S53 domain"/>
    <property type="match status" value="1"/>
</dbReference>
<dbReference type="InterPro" id="IPR034193">
    <property type="entry name" value="PCSK9_ProteinaseK-like"/>
</dbReference>
<dbReference type="InterPro" id="IPR000209">
    <property type="entry name" value="Peptidase_S8/S53_dom"/>
</dbReference>
<dbReference type="InterPro" id="IPR036852">
    <property type="entry name" value="Peptidase_S8/S53_dom_sf"/>
</dbReference>
<dbReference type="InterPro" id="IPR023827">
    <property type="entry name" value="Peptidase_S8_Asp-AS"/>
</dbReference>
<dbReference type="InterPro" id="IPR022398">
    <property type="entry name" value="Peptidase_S8_His-AS"/>
</dbReference>
<dbReference type="InterPro" id="IPR023828">
    <property type="entry name" value="Peptidase_S8_Ser-AS"/>
</dbReference>
<dbReference type="InterPro" id="IPR050131">
    <property type="entry name" value="Peptidase_S8_subtilisin-like"/>
</dbReference>
<dbReference type="InterPro" id="IPR015500">
    <property type="entry name" value="Peptidase_S8_subtilisin-rel"/>
</dbReference>
<dbReference type="InterPro" id="IPR010259">
    <property type="entry name" value="S8pro/Inhibitor_I9"/>
</dbReference>
<dbReference type="InterPro" id="IPR037045">
    <property type="entry name" value="S8pro/Inhibitor_I9_sf"/>
</dbReference>
<dbReference type="PANTHER" id="PTHR43806:SF58">
    <property type="entry name" value="ALKALINE PROTEASE 1-RELATED"/>
    <property type="match status" value="1"/>
</dbReference>
<dbReference type="PANTHER" id="PTHR43806">
    <property type="entry name" value="PEPTIDASE S8"/>
    <property type="match status" value="1"/>
</dbReference>
<dbReference type="Pfam" id="PF05922">
    <property type="entry name" value="Inhibitor_I9"/>
    <property type="match status" value="1"/>
</dbReference>
<dbReference type="Pfam" id="PF00082">
    <property type="entry name" value="Peptidase_S8"/>
    <property type="match status" value="1"/>
</dbReference>
<dbReference type="PRINTS" id="PR00723">
    <property type="entry name" value="SUBTILISIN"/>
</dbReference>
<dbReference type="SUPFAM" id="SSF52743">
    <property type="entry name" value="Subtilisin-like"/>
    <property type="match status" value="1"/>
</dbReference>
<dbReference type="PROSITE" id="PS51892">
    <property type="entry name" value="SUBTILASE"/>
    <property type="match status" value="1"/>
</dbReference>
<dbReference type="PROSITE" id="PS00136">
    <property type="entry name" value="SUBTILASE_ASP"/>
    <property type="match status" value="1"/>
</dbReference>
<dbReference type="PROSITE" id="PS00137">
    <property type="entry name" value="SUBTILASE_HIS"/>
    <property type="match status" value="1"/>
</dbReference>
<dbReference type="PROSITE" id="PS00138">
    <property type="entry name" value="SUBTILASE_SER"/>
    <property type="match status" value="1"/>
</dbReference>
<protein>
    <recommendedName>
        <fullName>Subtilisin-like protease 2</fullName>
        <ecNumber>3.4.21.-</ecNumber>
    </recommendedName>
</protein>
<keyword id="KW-0325">Glycoprotein</keyword>
<keyword id="KW-0378">Hydrolase</keyword>
<keyword id="KW-0645">Protease</keyword>
<keyword id="KW-0964">Secreted</keyword>
<keyword id="KW-0720">Serine protease</keyword>
<keyword id="KW-0732">Signal</keyword>
<keyword id="KW-0843">Virulence</keyword>
<keyword id="KW-0865">Zymogen</keyword>
<proteinExistence type="inferred from homology"/>
<accession>Q8J0D8</accession>